<protein>
    <recommendedName>
        <fullName evidence="1">Gamma-glutamyl phosphate reductase</fullName>
        <shortName evidence="1">GPR</shortName>
        <ecNumber evidence="1">1.2.1.41</ecNumber>
    </recommendedName>
    <alternativeName>
        <fullName evidence="1">Glutamate-5-semialdehyde dehydrogenase</fullName>
    </alternativeName>
    <alternativeName>
        <fullName evidence="1">Glutamyl-gamma-semialdehyde dehydrogenase</fullName>
        <shortName evidence="1">GSA dehydrogenase</shortName>
    </alternativeName>
</protein>
<comment type="function">
    <text evidence="1">Catalyzes the NADPH-dependent reduction of L-glutamate 5-phosphate into L-glutamate 5-semialdehyde and phosphate. The product spontaneously undergoes cyclization to form 1-pyrroline-5-carboxylate.</text>
</comment>
<comment type="catalytic activity">
    <reaction evidence="1">
        <text>L-glutamate 5-semialdehyde + phosphate + NADP(+) = L-glutamyl 5-phosphate + NADPH + H(+)</text>
        <dbReference type="Rhea" id="RHEA:19541"/>
        <dbReference type="ChEBI" id="CHEBI:15378"/>
        <dbReference type="ChEBI" id="CHEBI:43474"/>
        <dbReference type="ChEBI" id="CHEBI:57783"/>
        <dbReference type="ChEBI" id="CHEBI:58066"/>
        <dbReference type="ChEBI" id="CHEBI:58274"/>
        <dbReference type="ChEBI" id="CHEBI:58349"/>
        <dbReference type="EC" id="1.2.1.41"/>
    </reaction>
</comment>
<comment type="pathway">
    <text evidence="1">Amino-acid biosynthesis; L-proline biosynthesis; L-glutamate 5-semialdehyde from L-glutamate: step 2/2.</text>
</comment>
<comment type="subcellular location">
    <subcellularLocation>
        <location evidence="1">Cytoplasm</location>
    </subcellularLocation>
</comment>
<comment type="similarity">
    <text evidence="1">Belongs to the gamma-glutamyl phosphate reductase family.</text>
</comment>
<accession>B7L3Z5</accession>
<name>PROA_ECO55</name>
<feature type="chain" id="PRO_1000193602" description="Gamma-glutamyl phosphate reductase">
    <location>
        <begin position="1"/>
        <end position="417"/>
    </location>
</feature>
<evidence type="ECO:0000255" key="1">
    <source>
        <dbReference type="HAMAP-Rule" id="MF_00412"/>
    </source>
</evidence>
<reference key="1">
    <citation type="journal article" date="2009" name="PLoS Genet.">
        <title>Organised genome dynamics in the Escherichia coli species results in highly diverse adaptive paths.</title>
        <authorList>
            <person name="Touchon M."/>
            <person name="Hoede C."/>
            <person name="Tenaillon O."/>
            <person name="Barbe V."/>
            <person name="Baeriswyl S."/>
            <person name="Bidet P."/>
            <person name="Bingen E."/>
            <person name="Bonacorsi S."/>
            <person name="Bouchier C."/>
            <person name="Bouvet O."/>
            <person name="Calteau A."/>
            <person name="Chiapello H."/>
            <person name="Clermont O."/>
            <person name="Cruveiller S."/>
            <person name="Danchin A."/>
            <person name="Diard M."/>
            <person name="Dossat C."/>
            <person name="Karoui M.E."/>
            <person name="Frapy E."/>
            <person name="Garry L."/>
            <person name="Ghigo J.M."/>
            <person name="Gilles A.M."/>
            <person name="Johnson J."/>
            <person name="Le Bouguenec C."/>
            <person name="Lescat M."/>
            <person name="Mangenot S."/>
            <person name="Martinez-Jehanne V."/>
            <person name="Matic I."/>
            <person name="Nassif X."/>
            <person name="Oztas S."/>
            <person name="Petit M.A."/>
            <person name="Pichon C."/>
            <person name="Rouy Z."/>
            <person name="Ruf C.S."/>
            <person name="Schneider D."/>
            <person name="Tourret J."/>
            <person name="Vacherie B."/>
            <person name="Vallenet D."/>
            <person name="Medigue C."/>
            <person name="Rocha E.P.C."/>
            <person name="Denamur E."/>
        </authorList>
    </citation>
    <scope>NUCLEOTIDE SEQUENCE [LARGE SCALE GENOMIC DNA]</scope>
    <source>
        <strain>55989 / EAEC</strain>
    </source>
</reference>
<gene>
    <name evidence="1" type="primary">proA</name>
    <name type="ordered locus">EC55989_0267</name>
</gene>
<organism>
    <name type="scientific">Escherichia coli (strain 55989 / EAEC)</name>
    <dbReference type="NCBI Taxonomy" id="585055"/>
    <lineage>
        <taxon>Bacteria</taxon>
        <taxon>Pseudomonadati</taxon>
        <taxon>Pseudomonadota</taxon>
        <taxon>Gammaproteobacteria</taxon>
        <taxon>Enterobacterales</taxon>
        <taxon>Enterobacteriaceae</taxon>
        <taxon>Escherichia</taxon>
    </lineage>
</organism>
<keyword id="KW-0028">Amino-acid biosynthesis</keyword>
<keyword id="KW-0963">Cytoplasm</keyword>
<keyword id="KW-0521">NADP</keyword>
<keyword id="KW-0560">Oxidoreductase</keyword>
<keyword id="KW-0641">Proline biosynthesis</keyword>
<keyword id="KW-1185">Reference proteome</keyword>
<sequence>MLEQMGIAAKQASYKLAQLSSREKNRVLEKIADELEAQSEIILNANAQDVADARANGLGEAMLDRLALTPARLKGIADDVRQVCNLADPVGQVIDGSVLDSGLRLERRRVPLGVIGVIYEARPNVTVDVASLCLKTGNAVILRGGKETCRTNAATVAVIQDALKSCGLPAGAVQAIDNPDRALVSEMLRMDKYIDMLIPRGGAGLHKLCREQSTIPVITGGIGVCHIYVDESVEIAEALKVIVNAKTQRPSTCNTVETLLVNKNIADSFLPALSKQMAESGVTLHADAAALAQLQTGPAKVVAVKAEEYDDEFLSLDLNVKIVSDLDDAIAHIREHGTEHSDAILTRDMRNAQRFVNEVDSSAVYVNASTRFTDGGQFGLGAEVAVSTQKLHARGPMGLEALTTYKWIGIGDYTIRA</sequence>
<dbReference type="EC" id="1.2.1.41" evidence="1"/>
<dbReference type="EMBL" id="CU928145">
    <property type="protein sequence ID" value="CAU96146.1"/>
    <property type="molecule type" value="Genomic_DNA"/>
</dbReference>
<dbReference type="RefSeq" id="WP_000893256.1">
    <property type="nucleotide sequence ID" value="NC_011748.1"/>
</dbReference>
<dbReference type="SMR" id="B7L3Z5"/>
<dbReference type="KEGG" id="eck:EC55989_0267"/>
<dbReference type="HOGENOM" id="CLU_030231_0_0_6"/>
<dbReference type="UniPathway" id="UPA00098">
    <property type="reaction ID" value="UER00360"/>
</dbReference>
<dbReference type="Proteomes" id="UP000000746">
    <property type="component" value="Chromosome"/>
</dbReference>
<dbReference type="GO" id="GO:0005737">
    <property type="term" value="C:cytoplasm"/>
    <property type="evidence" value="ECO:0007669"/>
    <property type="project" value="UniProtKB-SubCell"/>
</dbReference>
<dbReference type="GO" id="GO:0004350">
    <property type="term" value="F:glutamate-5-semialdehyde dehydrogenase activity"/>
    <property type="evidence" value="ECO:0007669"/>
    <property type="project" value="UniProtKB-UniRule"/>
</dbReference>
<dbReference type="GO" id="GO:0050661">
    <property type="term" value="F:NADP binding"/>
    <property type="evidence" value="ECO:0007669"/>
    <property type="project" value="InterPro"/>
</dbReference>
<dbReference type="GO" id="GO:0055129">
    <property type="term" value="P:L-proline biosynthetic process"/>
    <property type="evidence" value="ECO:0007669"/>
    <property type="project" value="UniProtKB-UniRule"/>
</dbReference>
<dbReference type="CDD" id="cd07079">
    <property type="entry name" value="ALDH_F18-19_ProA-GPR"/>
    <property type="match status" value="1"/>
</dbReference>
<dbReference type="FunFam" id="3.40.309.10:FF:000006">
    <property type="entry name" value="Gamma-glutamyl phosphate reductase"/>
    <property type="match status" value="1"/>
</dbReference>
<dbReference type="Gene3D" id="3.40.605.10">
    <property type="entry name" value="Aldehyde Dehydrogenase, Chain A, domain 1"/>
    <property type="match status" value="1"/>
</dbReference>
<dbReference type="Gene3D" id="3.40.309.10">
    <property type="entry name" value="Aldehyde Dehydrogenase, Chain A, domain 2"/>
    <property type="match status" value="1"/>
</dbReference>
<dbReference type="HAMAP" id="MF_00412">
    <property type="entry name" value="ProA"/>
    <property type="match status" value="1"/>
</dbReference>
<dbReference type="InterPro" id="IPR016161">
    <property type="entry name" value="Ald_DH/histidinol_DH"/>
</dbReference>
<dbReference type="InterPro" id="IPR016163">
    <property type="entry name" value="Ald_DH_C"/>
</dbReference>
<dbReference type="InterPro" id="IPR016162">
    <property type="entry name" value="Ald_DH_N"/>
</dbReference>
<dbReference type="InterPro" id="IPR015590">
    <property type="entry name" value="Aldehyde_DH_dom"/>
</dbReference>
<dbReference type="InterPro" id="IPR020593">
    <property type="entry name" value="G-glutamylP_reductase_CS"/>
</dbReference>
<dbReference type="InterPro" id="IPR012134">
    <property type="entry name" value="Glu-5-SA_DH"/>
</dbReference>
<dbReference type="InterPro" id="IPR000965">
    <property type="entry name" value="GPR_dom"/>
</dbReference>
<dbReference type="NCBIfam" id="NF001221">
    <property type="entry name" value="PRK00197.1"/>
    <property type="match status" value="1"/>
</dbReference>
<dbReference type="NCBIfam" id="TIGR00407">
    <property type="entry name" value="proA"/>
    <property type="match status" value="1"/>
</dbReference>
<dbReference type="PANTHER" id="PTHR11063:SF8">
    <property type="entry name" value="DELTA-1-PYRROLINE-5-CARBOXYLATE SYNTHASE"/>
    <property type="match status" value="1"/>
</dbReference>
<dbReference type="PANTHER" id="PTHR11063">
    <property type="entry name" value="GLUTAMATE SEMIALDEHYDE DEHYDROGENASE"/>
    <property type="match status" value="1"/>
</dbReference>
<dbReference type="Pfam" id="PF00171">
    <property type="entry name" value="Aldedh"/>
    <property type="match status" value="1"/>
</dbReference>
<dbReference type="PIRSF" id="PIRSF000151">
    <property type="entry name" value="GPR"/>
    <property type="match status" value="1"/>
</dbReference>
<dbReference type="SUPFAM" id="SSF53720">
    <property type="entry name" value="ALDH-like"/>
    <property type="match status" value="1"/>
</dbReference>
<dbReference type="PROSITE" id="PS01223">
    <property type="entry name" value="PROA"/>
    <property type="match status" value="1"/>
</dbReference>
<proteinExistence type="inferred from homology"/>